<comment type="function">
    <text evidence="1">NDH shuttles electrons from NAD(P)H:plastoquinone, via FMN and iron-sulfur (Fe-S) centers, to quinones in the photosynthetic chain and possibly in a chloroplast respiratory chain. The immediate electron acceptor for the enzyme in this species is believed to be plastoquinone. Couples the redox reaction to proton translocation, and thus conserves the redox energy in a proton gradient.</text>
</comment>
<comment type="catalytic activity">
    <reaction evidence="1">
        <text>a plastoquinone + NADH + (n+1) H(+)(in) = a plastoquinol + NAD(+) + n H(+)(out)</text>
        <dbReference type="Rhea" id="RHEA:42608"/>
        <dbReference type="Rhea" id="RHEA-COMP:9561"/>
        <dbReference type="Rhea" id="RHEA-COMP:9562"/>
        <dbReference type="ChEBI" id="CHEBI:15378"/>
        <dbReference type="ChEBI" id="CHEBI:17757"/>
        <dbReference type="ChEBI" id="CHEBI:57540"/>
        <dbReference type="ChEBI" id="CHEBI:57945"/>
        <dbReference type="ChEBI" id="CHEBI:62192"/>
    </reaction>
</comment>
<comment type="catalytic activity">
    <reaction evidence="1">
        <text>a plastoquinone + NADPH + (n+1) H(+)(in) = a plastoquinol + NADP(+) + n H(+)(out)</text>
        <dbReference type="Rhea" id="RHEA:42612"/>
        <dbReference type="Rhea" id="RHEA-COMP:9561"/>
        <dbReference type="Rhea" id="RHEA-COMP:9562"/>
        <dbReference type="ChEBI" id="CHEBI:15378"/>
        <dbReference type="ChEBI" id="CHEBI:17757"/>
        <dbReference type="ChEBI" id="CHEBI:57783"/>
        <dbReference type="ChEBI" id="CHEBI:58349"/>
        <dbReference type="ChEBI" id="CHEBI:62192"/>
    </reaction>
</comment>
<comment type="cofactor">
    <cofactor evidence="1">
        <name>[4Fe-4S] cluster</name>
        <dbReference type="ChEBI" id="CHEBI:49883"/>
    </cofactor>
    <text evidence="1">Binds 2 [4Fe-4S] clusters per subunit.</text>
</comment>
<comment type="subunit">
    <text evidence="1">NDH is composed of at least 16 different subunits, 5 of which are encoded in the nucleus.</text>
</comment>
<comment type="subcellular location">
    <subcellularLocation>
        <location evidence="1">Plastid</location>
        <location evidence="1">Chloroplast thylakoid membrane</location>
        <topology evidence="1">Peripheral membrane protein</topology>
    </subcellularLocation>
</comment>
<comment type="similarity">
    <text evidence="1">Belongs to the complex I 23 kDa subunit family.</text>
</comment>
<proteinExistence type="inferred from homology"/>
<evidence type="ECO:0000255" key="1">
    <source>
        <dbReference type="HAMAP-Rule" id="MF_01351"/>
    </source>
</evidence>
<accession>Q68RV2</accession>
<organism>
    <name type="scientific">Panax ginseng</name>
    <name type="common">Korean ginseng</name>
    <dbReference type="NCBI Taxonomy" id="4054"/>
    <lineage>
        <taxon>Eukaryota</taxon>
        <taxon>Viridiplantae</taxon>
        <taxon>Streptophyta</taxon>
        <taxon>Embryophyta</taxon>
        <taxon>Tracheophyta</taxon>
        <taxon>Spermatophyta</taxon>
        <taxon>Magnoliopsida</taxon>
        <taxon>eudicotyledons</taxon>
        <taxon>Gunneridae</taxon>
        <taxon>Pentapetalae</taxon>
        <taxon>asterids</taxon>
        <taxon>campanulids</taxon>
        <taxon>Apiales</taxon>
        <taxon>Araliaceae</taxon>
        <taxon>Panax</taxon>
    </lineage>
</organism>
<geneLocation type="chloroplast"/>
<keyword id="KW-0004">4Fe-4S</keyword>
<keyword id="KW-0150">Chloroplast</keyword>
<keyword id="KW-0408">Iron</keyword>
<keyword id="KW-0411">Iron-sulfur</keyword>
<keyword id="KW-0472">Membrane</keyword>
<keyword id="KW-0479">Metal-binding</keyword>
<keyword id="KW-0520">NAD</keyword>
<keyword id="KW-0521">NADP</keyword>
<keyword id="KW-0934">Plastid</keyword>
<keyword id="KW-0618">Plastoquinone</keyword>
<keyword id="KW-0874">Quinone</keyword>
<keyword id="KW-0677">Repeat</keyword>
<keyword id="KW-0793">Thylakoid</keyword>
<keyword id="KW-1278">Translocase</keyword>
<dbReference type="EC" id="7.1.1.-" evidence="1"/>
<dbReference type="EMBL" id="AY582139">
    <property type="protein sequence ID" value="AAT98564.1"/>
    <property type="molecule type" value="Genomic_DNA"/>
</dbReference>
<dbReference type="RefSeq" id="YP_087020.1">
    <property type="nucleotide sequence ID" value="NC_006290.1"/>
</dbReference>
<dbReference type="SMR" id="Q68RV2"/>
<dbReference type="GeneID" id="3021495"/>
<dbReference type="GO" id="GO:0009535">
    <property type="term" value="C:chloroplast thylakoid membrane"/>
    <property type="evidence" value="ECO:0007669"/>
    <property type="project" value="UniProtKB-SubCell"/>
</dbReference>
<dbReference type="GO" id="GO:0051539">
    <property type="term" value="F:4 iron, 4 sulfur cluster binding"/>
    <property type="evidence" value="ECO:0007669"/>
    <property type="project" value="UniProtKB-KW"/>
</dbReference>
<dbReference type="GO" id="GO:0005506">
    <property type="term" value="F:iron ion binding"/>
    <property type="evidence" value="ECO:0007669"/>
    <property type="project" value="UniProtKB-UniRule"/>
</dbReference>
<dbReference type="GO" id="GO:0008137">
    <property type="term" value="F:NADH dehydrogenase (ubiquinone) activity"/>
    <property type="evidence" value="ECO:0007669"/>
    <property type="project" value="InterPro"/>
</dbReference>
<dbReference type="GO" id="GO:0048038">
    <property type="term" value="F:quinone binding"/>
    <property type="evidence" value="ECO:0007669"/>
    <property type="project" value="UniProtKB-KW"/>
</dbReference>
<dbReference type="GO" id="GO:0019684">
    <property type="term" value="P:photosynthesis, light reaction"/>
    <property type="evidence" value="ECO:0007669"/>
    <property type="project" value="UniProtKB-UniRule"/>
</dbReference>
<dbReference type="FunFam" id="3.30.70.3270:FF:000006">
    <property type="entry name" value="NAD(P)H-quinone oxidoreductase subunit I, chloroplastic"/>
    <property type="match status" value="1"/>
</dbReference>
<dbReference type="Gene3D" id="3.30.70.3270">
    <property type="match status" value="1"/>
</dbReference>
<dbReference type="HAMAP" id="MF_01351">
    <property type="entry name" value="NDH1_NuoI"/>
    <property type="match status" value="1"/>
</dbReference>
<dbReference type="InterPro" id="IPR017896">
    <property type="entry name" value="4Fe4S_Fe-S-bd"/>
</dbReference>
<dbReference type="InterPro" id="IPR017900">
    <property type="entry name" value="4Fe4S_Fe_S_CS"/>
</dbReference>
<dbReference type="InterPro" id="IPR010226">
    <property type="entry name" value="NADH_quinone_OxRdtase_chainI"/>
</dbReference>
<dbReference type="InterPro" id="IPR004497">
    <property type="entry name" value="NDHI"/>
</dbReference>
<dbReference type="NCBIfam" id="TIGR00403">
    <property type="entry name" value="ndhI"/>
    <property type="match status" value="1"/>
</dbReference>
<dbReference type="NCBIfam" id="TIGR01971">
    <property type="entry name" value="NuoI"/>
    <property type="match status" value="1"/>
</dbReference>
<dbReference type="NCBIfam" id="NF004537">
    <property type="entry name" value="PRK05888.1-3"/>
    <property type="match status" value="1"/>
</dbReference>
<dbReference type="PANTHER" id="PTHR47275">
    <property type="entry name" value="NAD(P)H-QUINONE OXIDOREDUCTASE SUBUNIT I, CHLOROPLASTIC"/>
    <property type="match status" value="1"/>
</dbReference>
<dbReference type="PANTHER" id="PTHR47275:SF1">
    <property type="entry name" value="NAD(P)H-QUINONE OXIDOREDUCTASE SUBUNIT I, CHLOROPLASTIC"/>
    <property type="match status" value="1"/>
</dbReference>
<dbReference type="Pfam" id="PF13237">
    <property type="entry name" value="Fer4_10"/>
    <property type="match status" value="1"/>
</dbReference>
<dbReference type="SUPFAM" id="SSF54862">
    <property type="entry name" value="4Fe-4S ferredoxins"/>
    <property type="match status" value="1"/>
</dbReference>
<dbReference type="PROSITE" id="PS00198">
    <property type="entry name" value="4FE4S_FER_1"/>
    <property type="match status" value="2"/>
</dbReference>
<dbReference type="PROSITE" id="PS51379">
    <property type="entry name" value="4FE4S_FER_2"/>
    <property type="match status" value="2"/>
</dbReference>
<sequence length="167" mass="19537">MFSMVTEFMNYGQQTVRAARYIGQGFMITLSHANRLPVTIQYPYEKLITSERFRGRIHFEFDKCIACEVCVRVCPIDLPVVDWKLEMDIRKKRLLNYSIDFGICIFCGNCVEYCPTNCLSMTEEYELSTYDRHELNYNQIALGRLPMAVIDDYTTRTILNLPEIKNA</sequence>
<protein>
    <recommendedName>
        <fullName evidence="1">NAD(P)H-quinone oxidoreductase subunit I, chloroplastic</fullName>
        <ecNumber evidence="1">7.1.1.-</ecNumber>
    </recommendedName>
    <alternativeName>
        <fullName evidence="1">NAD(P)H dehydrogenase subunit I</fullName>
        <shortName evidence="1">NDH subunit I</shortName>
    </alternativeName>
    <alternativeName>
        <fullName evidence="1">NADH-plastoquinone oxidoreductase subunit I</fullName>
    </alternativeName>
</protein>
<gene>
    <name evidence="1" type="primary">ndhI</name>
    <name type="ORF">PSC1214</name>
</gene>
<name>NDHI_PANGI</name>
<reference key="1">
    <citation type="journal article" date="2004" name="DNA Res.">
        <title>Complete chloroplast genome sequence from Korea ginseng (Panax schinseng Nees) and comparative analysis of sequence evolution among 17 vascular plants.</title>
        <authorList>
            <person name="Kim K.-J."/>
            <person name="Lee H.-L."/>
        </authorList>
    </citation>
    <scope>NUCLEOTIDE SEQUENCE [LARGE SCALE GENOMIC DNA]</scope>
</reference>
<feature type="chain" id="PRO_0000245669" description="NAD(P)H-quinone oxidoreductase subunit I, chloroplastic">
    <location>
        <begin position="1"/>
        <end position="167"/>
    </location>
</feature>
<feature type="domain" description="4Fe-4S ferredoxin-type 1" evidence="1">
    <location>
        <begin position="55"/>
        <end position="84"/>
    </location>
</feature>
<feature type="domain" description="4Fe-4S ferredoxin-type 2" evidence="1">
    <location>
        <begin position="95"/>
        <end position="124"/>
    </location>
</feature>
<feature type="binding site" evidence="1">
    <location>
        <position position="64"/>
    </location>
    <ligand>
        <name>[4Fe-4S] cluster</name>
        <dbReference type="ChEBI" id="CHEBI:49883"/>
        <label>1</label>
    </ligand>
</feature>
<feature type="binding site" evidence="1">
    <location>
        <position position="67"/>
    </location>
    <ligand>
        <name>[4Fe-4S] cluster</name>
        <dbReference type="ChEBI" id="CHEBI:49883"/>
        <label>1</label>
    </ligand>
</feature>
<feature type="binding site" evidence="1">
    <location>
        <position position="70"/>
    </location>
    <ligand>
        <name>[4Fe-4S] cluster</name>
        <dbReference type="ChEBI" id="CHEBI:49883"/>
        <label>1</label>
    </ligand>
</feature>
<feature type="binding site" evidence="1">
    <location>
        <position position="74"/>
    </location>
    <ligand>
        <name>[4Fe-4S] cluster</name>
        <dbReference type="ChEBI" id="CHEBI:49883"/>
        <label>2</label>
    </ligand>
</feature>
<feature type="binding site" evidence="1">
    <location>
        <position position="104"/>
    </location>
    <ligand>
        <name>[4Fe-4S] cluster</name>
        <dbReference type="ChEBI" id="CHEBI:49883"/>
        <label>2</label>
    </ligand>
</feature>
<feature type="binding site" evidence="1">
    <location>
        <position position="107"/>
    </location>
    <ligand>
        <name>[4Fe-4S] cluster</name>
        <dbReference type="ChEBI" id="CHEBI:49883"/>
        <label>2</label>
    </ligand>
</feature>
<feature type="binding site" evidence="1">
    <location>
        <position position="110"/>
    </location>
    <ligand>
        <name>[4Fe-4S] cluster</name>
        <dbReference type="ChEBI" id="CHEBI:49883"/>
        <label>2</label>
    </ligand>
</feature>
<feature type="binding site" evidence="1">
    <location>
        <position position="114"/>
    </location>
    <ligand>
        <name>[4Fe-4S] cluster</name>
        <dbReference type="ChEBI" id="CHEBI:49883"/>
        <label>1</label>
    </ligand>
</feature>